<keyword id="KW-0963">Cytoplasm</keyword>
<keyword id="KW-0227">DNA damage</keyword>
<keyword id="KW-0228">DNA excision</keyword>
<keyword id="KW-0234">DNA repair</keyword>
<keyword id="KW-0267">Excision nuclease</keyword>
<keyword id="KW-1185">Reference proteome</keyword>
<keyword id="KW-0742">SOS response</keyword>
<feature type="chain" id="PRO_0000138308" description="UvrABC system protein C">
    <location>
        <begin position="1"/>
        <end position="604"/>
    </location>
</feature>
<feature type="domain" description="GIY-YIG" evidence="1">
    <location>
        <begin position="15"/>
        <end position="92"/>
    </location>
</feature>
<feature type="domain" description="UVR" evidence="1">
    <location>
        <begin position="197"/>
        <end position="232"/>
    </location>
</feature>
<organism>
    <name type="scientific">Lactiplantibacillus plantarum (strain ATCC BAA-793 / NCIMB 8826 / WCFS1)</name>
    <name type="common">Lactobacillus plantarum</name>
    <dbReference type="NCBI Taxonomy" id="220668"/>
    <lineage>
        <taxon>Bacteria</taxon>
        <taxon>Bacillati</taxon>
        <taxon>Bacillota</taxon>
        <taxon>Bacilli</taxon>
        <taxon>Lactobacillales</taxon>
        <taxon>Lactobacillaceae</taxon>
        <taxon>Lactiplantibacillus</taxon>
    </lineage>
</organism>
<reference key="1">
    <citation type="journal article" date="2003" name="Proc. Natl. Acad. Sci. U.S.A.">
        <title>Complete genome sequence of Lactobacillus plantarum WCFS1.</title>
        <authorList>
            <person name="Kleerebezem M."/>
            <person name="Boekhorst J."/>
            <person name="van Kranenburg R."/>
            <person name="Molenaar D."/>
            <person name="Kuipers O.P."/>
            <person name="Leer R."/>
            <person name="Tarchini R."/>
            <person name="Peters S.A."/>
            <person name="Sandbrink H.M."/>
            <person name="Fiers M.W.E.J."/>
            <person name="Stiekema W."/>
            <person name="Klein Lankhorst R.M."/>
            <person name="Bron P.A."/>
            <person name="Hoffer S.M."/>
            <person name="Nierop Groot M.N."/>
            <person name="Kerkhoven R."/>
            <person name="De Vries M."/>
            <person name="Ursing B."/>
            <person name="De Vos W.M."/>
            <person name="Siezen R.J."/>
        </authorList>
    </citation>
    <scope>NUCLEOTIDE SEQUENCE [LARGE SCALE GENOMIC DNA]</scope>
    <source>
        <strain>ATCC BAA-793 / NCIMB 8826 / WCFS1</strain>
    </source>
</reference>
<reference key="2">
    <citation type="journal article" date="2012" name="J. Bacteriol.">
        <title>Complete resequencing and reannotation of the Lactobacillus plantarum WCFS1 genome.</title>
        <authorList>
            <person name="Siezen R.J."/>
            <person name="Francke C."/>
            <person name="Renckens B."/>
            <person name="Boekhorst J."/>
            <person name="Wels M."/>
            <person name="Kleerebezem M."/>
            <person name="van Hijum S.A."/>
        </authorList>
    </citation>
    <scope>NUCLEOTIDE SEQUENCE [LARGE SCALE GENOMIC DNA]</scope>
    <scope>GENOME REANNOTATION</scope>
    <source>
        <strain>ATCC BAA-793 / NCIMB 8826 / WCFS1</strain>
    </source>
</reference>
<evidence type="ECO:0000255" key="1">
    <source>
        <dbReference type="HAMAP-Rule" id="MF_00203"/>
    </source>
</evidence>
<dbReference type="EMBL" id="AL935263">
    <property type="protein sequence ID" value="CCC79345.1"/>
    <property type="molecule type" value="Genomic_DNA"/>
</dbReference>
<dbReference type="RefSeq" id="WP_003640789.1">
    <property type="nucleotide sequence ID" value="NC_004567.2"/>
</dbReference>
<dbReference type="RefSeq" id="YP_004889859.1">
    <property type="nucleotide sequence ID" value="NC_004567.2"/>
</dbReference>
<dbReference type="SMR" id="Q88VE9"/>
<dbReference type="STRING" id="220668.lp_2109"/>
<dbReference type="EnsemblBacteria" id="CCC79345">
    <property type="protein sequence ID" value="CCC79345"/>
    <property type="gene ID" value="lp_2109"/>
</dbReference>
<dbReference type="GeneID" id="77215502"/>
<dbReference type="KEGG" id="lpl:lp_2109"/>
<dbReference type="PATRIC" id="fig|220668.9.peg.1786"/>
<dbReference type="eggNOG" id="COG0322">
    <property type="taxonomic scope" value="Bacteria"/>
</dbReference>
<dbReference type="HOGENOM" id="CLU_014841_3_2_9"/>
<dbReference type="OrthoDB" id="9804933at2"/>
<dbReference type="PhylomeDB" id="Q88VE9"/>
<dbReference type="Proteomes" id="UP000000432">
    <property type="component" value="Chromosome"/>
</dbReference>
<dbReference type="GO" id="GO:0005737">
    <property type="term" value="C:cytoplasm"/>
    <property type="evidence" value="ECO:0007669"/>
    <property type="project" value="UniProtKB-SubCell"/>
</dbReference>
<dbReference type="GO" id="GO:0009380">
    <property type="term" value="C:excinuclease repair complex"/>
    <property type="evidence" value="ECO:0007669"/>
    <property type="project" value="InterPro"/>
</dbReference>
<dbReference type="GO" id="GO:0003677">
    <property type="term" value="F:DNA binding"/>
    <property type="evidence" value="ECO:0007669"/>
    <property type="project" value="UniProtKB-UniRule"/>
</dbReference>
<dbReference type="GO" id="GO:0009381">
    <property type="term" value="F:excinuclease ABC activity"/>
    <property type="evidence" value="ECO:0007669"/>
    <property type="project" value="UniProtKB-UniRule"/>
</dbReference>
<dbReference type="GO" id="GO:0006289">
    <property type="term" value="P:nucleotide-excision repair"/>
    <property type="evidence" value="ECO:0007669"/>
    <property type="project" value="UniProtKB-UniRule"/>
</dbReference>
<dbReference type="GO" id="GO:0009432">
    <property type="term" value="P:SOS response"/>
    <property type="evidence" value="ECO:0007669"/>
    <property type="project" value="UniProtKB-UniRule"/>
</dbReference>
<dbReference type="CDD" id="cd10434">
    <property type="entry name" value="GIY-YIG_UvrC_Cho"/>
    <property type="match status" value="1"/>
</dbReference>
<dbReference type="FunFam" id="3.30.420.340:FF:000002">
    <property type="entry name" value="UvrABC system protein C"/>
    <property type="match status" value="1"/>
</dbReference>
<dbReference type="FunFam" id="3.40.1440.10:FF:000001">
    <property type="entry name" value="UvrABC system protein C"/>
    <property type="match status" value="1"/>
</dbReference>
<dbReference type="Gene3D" id="1.10.150.20">
    <property type="entry name" value="5' to 3' exonuclease, C-terminal subdomain"/>
    <property type="match status" value="1"/>
</dbReference>
<dbReference type="Gene3D" id="3.40.1440.10">
    <property type="entry name" value="GIY-YIG endonuclease"/>
    <property type="match status" value="1"/>
</dbReference>
<dbReference type="Gene3D" id="4.10.860.10">
    <property type="entry name" value="UVR domain"/>
    <property type="match status" value="1"/>
</dbReference>
<dbReference type="Gene3D" id="3.30.420.340">
    <property type="entry name" value="UvrC, RNAse H endonuclease domain"/>
    <property type="match status" value="1"/>
</dbReference>
<dbReference type="HAMAP" id="MF_00203">
    <property type="entry name" value="UvrC"/>
    <property type="match status" value="1"/>
</dbReference>
<dbReference type="InterPro" id="IPR000305">
    <property type="entry name" value="GIY-YIG_endonuc"/>
</dbReference>
<dbReference type="InterPro" id="IPR035901">
    <property type="entry name" value="GIY-YIG_endonuc_sf"/>
</dbReference>
<dbReference type="InterPro" id="IPR047296">
    <property type="entry name" value="GIY-YIG_UvrC_Cho"/>
</dbReference>
<dbReference type="InterPro" id="IPR010994">
    <property type="entry name" value="RuvA_2-like"/>
</dbReference>
<dbReference type="InterPro" id="IPR001943">
    <property type="entry name" value="UVR_dom"/>
</dbReference>
<dbReference type="InterPro" id="IPR036876">
    <property type="entry name" value="UVR_dom_sf"/>
</dbReference>
<dbReference type="InterPro" id="IPR050066">
    <property type="entry name" value="UvrABC_protein_C"/>
</dbReference>
<dbReference type="InterPro" id="IPR004791">
    <property type="entry name" value="UvrC"/>
</dbReference>
<dbReference type="InterPro" id="IPR001162">
    <property type="entry name" value="UvrC_RNase_H_dom"/>
</dbReference>
<dbReference type="InterPro" id="IPR038476">
    <property type="entry name" value="UvrC_RNase_H_dom_sf"/>
</dbReference>
<dbReference type="NCBIfam" id="TIGR00194">
    <property type="entry name" value="uvrC"/>
    <property type="match status" value="1"/>
</dbReference>
<dbReference type="PANTHER" id="PTHR30562:SF1">
    <property type="entry name" value="UVRABC SYSTEM PROTEIN C"/>
    <property type="match status" value="1"/>
</dbReference>
<dbReference type="PANTHER" id="PTHR30562">
    <property type="entry name" value="UVRC/OXIDOREDUCTASE"/>
    <property type="match status" value="1"/>
</dbReference>
<dbReference type="Pfam" id="PF01541">
    <property type="entry name" value="GIY-YIG"/>
    <property type="match status" value="1"/>
</dbReference>
<dbReference type="Pfam" id="PF14520">
    <property type="entry name" value="HHH_5"/>
    <property type="match status" value="1"/>
</dbReference>
<dbReference type="Pfam" id="PF02151">
    <property type="entry name" value="UVR"/>
    <property type="match status" value="1"/>
</dbReference>
<dbReference type="Pfam" id="PF22920">
    <property type="entry name" value="UvrC_RNaseH"/>
    <property type="match status" value="1"/>
</dbReference>
<dbReference type="Pfam" id="PF08459">
    <property type="entry name" value="UvrC_RNaseH_dom"/>
    <property type="match status" value="1"/>
</dbReference>
<dbReference type="SMART" id="SM00465">
    <property type="entry name" value="GIYc"/>
    <property type="match status" value="1"/>
</dbReference>
<dbReference type="SUPFAM" id="SSF46600">
    <property type="entry name" value="C-terminal UvrC-binding domain of UvrB"/>
    <property type="match status" value="1"/>
</dbReference>
<dbReference type="SUPFAM" id="SSF82771">
    <property type="entry name" value="GIY-YIG endonuclease"/>
    <property type="match status" value="1"/>
</dbReference>
<dbReference type="SUPFAM" id="SSF47781">
    <property type="entry name" value="RuvA domain 2-like"/>
    <property type="match status" value="1"/>
</dbReference>
<dbReference type="PROSITE" id="PS50164">
    <property type="entry name" value="GIY_YIG"/>
    <property type="match status" value="1"/>
</dbReference>
<dbReference type="PROSITE" id="PS50151">
    <property type="entry name" value="UVR"/>
    <property type="match status" value="1"/>
</dbReference>
<dbReference type="PROSITE" id="PS50165">
    <property type="entry name" value="UVRC"/>
    <property type="match status" value="1"/>
</dbReference>
<sequence>MASAHIEHKLSLLPDLPGCYLMKNLNSQIIYVGKAKNLKNRVRSYFKSSHTGKTARLVSEIADFEFIVTSTDKEAFLLEITLIQKHQPYFNIKLKKGTGYPYIKITNERDPQILIVSDVRKDGGYYFGPYPNVYAAQETVNFIQKVYPLRRCHGFQKRPCLYYHMGQCLGACFKTVPVAEYDAQIKRIKSFLNGHVETVKKQLTKRMDQAAADLEFERAAELRDQLNYIEMTVEKQKIISNDNTPRDLFNFYLDKGWLSIQVFFIRQARLMKREKRLFPVVSTAPEEMTSFILQFYNRKNNVLPREVLVPNGLDKQVLSDILGIPVRTPQRGQKKDLLDMAQKNARIVLEEKFRLLELDERKTTGAMQEITDALGIPAGHKIEAFDHSHIQGADLVSAMVVFTDGQPNKKLYRKYKLRTVDHADEAASTREVIRRRYTRLLKEHAALPDLILMDGGEIQLEAAKDVLENELGIATPVAAMVKNDHHKTADLLASAGDQHLHLDPKSQGFYLLQRIQDEVHRFAITFHRQVHTKHSLSSRLDEIPGVGPKTRNKLLRKFGSMSKIAGASLEEIQSLGIAKNVAQTVKFSLAGGGVTPKHYQKGAT</sequence>
<gene>
    <name evidence="1" type="primary">uvrC</name>
    <name type="ordered locus">lp_2109</name>
</gene>
<protein>
    <recommendedName>
        <fullName evidence="1">UvrABC system protein C</fullName>
        <shortName evidence="1">Protein UvrC</shortName>
    </recommendedName>
    <alternativeName>
        <fullName evidence="1">Excinuclease ABC subunit C</fullName>
    </alternativeName>
</protein>
<accession>Q88VE9</accession>
<accession>F9UQ56</accession>
<comment type="function">
    <text evidence="1">The UvrABC repair system catalyzes the recognition and processing of DNA lesions. UvrC both incises the 5' and 3' sides of the lesion. The N-terminal half is responsible for the 3' incision and the C-terminal half is responsible for the 5' incision.</text>
</comment>
<comment type="subunit">
    <text evidence="1">Interacts with UvrB in an incision complex.</text>
</comment>
<comment type="subcellular location">
    <subcellularLocation>
        <location evidence="1">Cytoplasm</location>
    </subcellularLocation>
</comment>
<comment type="similarity">
    <text evidence="1">Belongs to the UvrC family.</text>
</comment>
<proteinExistence type="inferred from homology"/>
<name>UVRC_LACPL</name>